<reference key="1">
    <citation type="journal article" date="2005" name="Nucleic Acids Res.">
        <title>Genome dynamics and diversity of Shigella species, the etiologic agents of bacillary dysentery.</title>
        <authorList>
            <person name="Yang F."/>
            <person name="Yang J."/>
            <person name="Zhang X."/>
            <person name="Chen L."/>
            <person name="Jiang Y."/>
            <person name="Yan Y."/>
            <person name="Tang X."/>
            <person name="Wang J."/>
            <person name="Xiong Z."/>
            <person name="Dong J."/>
            <person name="Xue Y."/>
            <person name="Zhu Y."/>
            <person name="Xu X."/>
            <person name="Sun L."/>
            <person name="Chen S."/>
            <person name="Nie H."/>
            <person name="Peng J."/>
            <person name="Xu J."/>
            <person name="Wang Y."/>
            <person name="Yuan Z."/>
            <person name="Wen Y."/>
            <person name="Yao Z."/>
            <person name="Shen Y."/>
            <person name="Qiang B."/>
            <person name="Hou Y."/>
            <person name="Yu J."/>
            <person name="Jin Q."/>
        </authorList>
    </citation>
    <scope>NUCLEOTIDE SEQUENCE [LARGE SCALE GENOMIC DNA]</scope>
    <source>
        <strain>Sb227</strain>
    </source>
</reference>
<keyword id="KW-0963">Cytoplasm</keyword>
<keyword id="KW-0489">Methyltransferase</keyword>
<keyword id="KW-0698">rRNA processing</keyword>
<keyword id="KW-0949">S-adenosyl-L-methionine</keyword>
<keyword id="KW-0808">Transferase</keyword>
<dbReference type="EC" id="2.1.1.166" evidence="1"/>
<dbReference type="EMBL" id="CP000036">
    <property type="protein sequence ID" value="ABB67702.1"/>
    <property type="molecule type" value="Genomic_DNA"/>
</dbReference>
<dbReference type="RefSeq" id="WP_000145975.1">
    <property type="nucleotide sequence ID" value="NC_007613.1"/>
</dbReference>
<dbReference type="SMR" id="Q31W56"/>
<dbReference type="GeneID" id="93778802"/>
<dbReference type="KEGG" id="sbo:SBO_3203"/>
<dbReference type="HOGENOM" id="CLU_009422_4_0_6"/>
<dbReference type="Proteomes" id="UP000007067">
    <property type="component" value="Chromosome"/>
</dbReference>
<dbReference type="GO" id="GO:0005737">
    <property type="term" value="C:cytoplasm"/>
    <property type="evidence" value="ECO:0007669"/>
    <property type="project" value="UniProtKB-SubCell"/>
</dbReference>
<dbReference type="GO" id="GO:0008650">
    <property type="term" value="F:rRNA (uridine-2'-O-)-methyltransferase activity"/>
    <property type="evidence" value="ECO:0007669"/>
    <property type="project" value="UniProtKB-UniRule"/>
</dbReference>
<dbReference type="CDD" id="cd02440">
    <property type="entry name" value="AdoMet_MTases"/>
    <property type="match status" value="1"/>
</dbReference>
<dbReference type="FunFam" id="3.40.50.150:FF:000005">
    <property type="entry name" value="Ribosomal RNA large subunit methyltransferase E"/>
    <property type="match status" value="1"/>
</dbReference>
<dbReference type="Gene3D" id="3.40.50.150">
    <property type="entry name" value="Vaccinia Virus protein VP39"/>
    <property type="match status" value="1"/>
</dbReference>
<dbReference type="HAMAP" id="MF_01547">
    <property type="entry name" value="RNA_methyltr_E"/>
    <property type="match status" value="1"/>
</dbReference>
<dbReference type="InterPro" id="IPR050082">
    <property type="entry name" value="RNA_methyltr_RlmE"/>
</dbReference>
<dbReference type="InterPro" id="IPR002877">
    <property type="entry name" value="RNA_MeTrfase_FtsJ_dom"/>
</dbReference>
<dbReference type="InterPro" id="IPR015507">
    <property type="entry name" value="rRNA-MeTfrase_E"/>
</dbReference>
<dbReference type="InterPro" id="IPR004512">
    <property type="entry name" value="rRNA_MeTrfase_gammaproteobac"/>
</dbReference>
<dbReference type="InterPro" id="IPR029063">
    <property type="entry name" value="SAM-dependent_MTases_sf"/>
</dbReference>
<dbReference type="NCBIfam" id="NF008390">
    <property type="entry name" value="PRK11188.1"/>
    <property type="match status" value="1"/>
</dbReference>
<dbReference type="NCBIfam" id="TIGR00438">
    <property type="entry name" value="rrmJ"/>
    <property type="match status" value="1"/>
</dbReference>
<dbReference type="PANTHER" id="PTHR10920">
    <property type="entry name" value="RIBOSOMAL RNA METHYLTRANSFERASE"/>
    <property type="match status" value="1"/>
</dbReference>
<dbReference type="PANTHER" id="PTHR10920:SF18">
    <property type="entry name" value="RRNA METHYLTRANSFERASE 2, MITOCHONDRIAL"/>
    <property type="match status" value="1"/>
</dbReference>
<dbReference type="Pfam" id="PF01728">
    <property type="entry name" value="FtsJ"/>
    <property type="match status" value="1"/>
</dbReference>
<dbReference type="PIRSF" id="PIRSF005461">
    <property type="entry name" value="23S_rRNA_mtase"/>
    <property type="match status" value="1"/>
</dbReference>
<dbReference type="SUPFAM" id="SSF53335">
    <property type="entry name" value="S-adenosyl-L-methionine-dependent methyltransferases"/>
    <property type="match status" value="1"/>
</dbReference>
<evidence type="ECO:0000255" key="1">
    <source>
        <dbReference type="HAMAP-Rule" id="MF_01547"/>
    </source>
</evidence>
<name>RLME_SHIBS</name>
<protein>
    <recommendedName>
        <fullName evidence="1">Ribosomal RNA large subunit methyltransferase E</fullName>
        <ecNumber evidence="1">2.1.1.166</ecNumber>
    </recommendedName>
    <alternativeName>
        <fullName evidence="1">23S rRNA Um2552 methyltransferase</fullName>
    </alternativeName>
    <alternativeName>
        <fullName evidence="1">rRNA (uridine-2'-O-)-methyltransferase</fullName>
    </alternativeName>
</protein>
<feature type="chain" id="PRO_0000282801" description="Ribosomal RNA large subunit methyltransferase E">
    <location>
        <begin position="1"/>
        <end position="209"/>
    </location>
</feature>
<feature type="active site" description="Proton acceptor" evidence="1">
    <location>
        <position position="164"/>
    </location>
</feature>
<feature type="binding site" evidence="1">
    <location>
        <position position="63"/>
    </location>
    <ligand>
        <name>S-adenosyl-L-methionine</name>
        <dbReference type="ChEBI" id="CHEBI:59789"/>
    </ligand>
</feature>
<feature type="binding site" evidence="1">
    <location>
        <position position="65"/>
    </location>
    <ligand>
        <name>S-adenosyl-L-methionine</name>
        <dbReference type="ChEBI" id="CHEBI:59789"/>
    </ligand>
</feature>
<feature type="binding site" evidence="1">
    <location>
        <position position="83"/>
    </location>
    <ligand>
        <name>S-adenosyl-L-methionine</name>
        <dbReference type="ChEBI" id="CHEBI:59789"/>
    </ligand>
</feature>
<feature type="binding site" evidence="1">
    <location>
        <position position="99"/>
    </location>
    <ligand>
        <name>S-adenosyl-L-methionine</name>
        <dbReference type="ChEBI" id="CHEBI:59789"/>
    </ligand>
</feature>
<feature type="binding site" evidence="1">
    <location>
        <position position="124"/>
    </location>
    <ligand>
        <name>S-adenosyl-L-methionine</name>
        <dbReference type="ChEBI" id="CHEBI:59789"/>
    </ligand>
</feature>
<sequence>MTGKKRSASSSRWLQEHFSDKYVQQAQKKGLRSRAWFKLDEIQQSDKLFKPGMTVVDLGAAPGGWSQYVVTQIGGKGRIIACDLLPMDPIVGVDFLQGDFRDELVMKALLERVGDSKVQVVMSDMAPNMSGTPAVDIPRAMYLVELALEMCRDVLAPGGSFVVKVFQGEGFDEYLREIRSLFTKVKVRKPDSSRARSREVYIVATGRKP</sequence>
<proteinExistence type="inferred from homology"/>
<comment type="function">
    <text evidence="1">Specifically methylates the uridine in position 2552 of 23S rRNA at the 2'-O position of the ribose in the fully assembled 50S ribosomal subunit.</text>
</comment>
<comment type="catalytic activity">
    <reaction evidence="1">
        <text>uridine(2552) in 23S rRNA + S-adenosyl-L-methionine = 2'-O-methyluridine(2552) in 23S rRNA + S-adenosyl-L-homocysteine + H(+)</text>
        <dbReference type="Rhea" id="RHEA:42720"/>
        <dbReference type="Rhea" id="RHEA-COMP:10202"/>
        <dbReference type="Rhea" id="RHEA-COMP:10203"/>
        <dbReference type="ChEBI" id="CHEBI:15378"/>
        <dbReference type="ChEBI" id="CHEBI:57856"/>
        <dbReference type="ChEBI" id="CHEBI:59789"/>
        <dbReference type="ChEBI" id="CHEBI:65315"/>
        <dbReference type="ChEBI" id="CHEBI:74478"/>
        <dbReference type="EC" id="2.1.1.166"/>
    </reaction>
</comment>
<comment type="subcellular location">
    <subcellularLocation>
        <location evidence="1">Cytoplasm</location>
    </subcellularLocation>
</comment>
<comment type="similarity">
    <text evidence="1">Belongs to the class I-like SAM-binding methyltransferase superfamily. RNA methyltransferase RlmE family.</text>
</comment>
<accession>Q31W56</accession>
<gene>
    <name evidence="1" type="primary">rlmE</name>
    <name evidence="1" type="synonym">ftsJ</name>
    <name evidence="1" type="synonym">rrmJ</name>
    <name type="ordered locus">SBO_3203</name>
</gene>
<organism>
    <name type="scientific">Shigella boydii serotype 4 (strain Sb227)</name>
    <dbReference type="NCBI Taxonomy" id="300268"/>
    <lineage>
        <taxon>Bacteria</taxon>
        <taxon>Pseudomonadati</taxon>
        <taxon>Pseudomonadota</taxon>
        <taxon>Gammaproteobacteria</taxon>
        <taxon>Enterobacterales</taxon>
        <taxon>Enterobacteriaceae</taxon>
        <taxon>Shigella</taxon>
    </lineage>
</organism>